<proteinExistence type="evidence at protein level"/>
<protein>
    <recommendedName>
        <fullName>Nuclease EXOG, mitochondrial</fullName>
        <ecNumber>3.1.30.-</ecNumber>
    </recommendedName>
    <alternativeName>
        <fullName>Endonuclease G-like 1</fullName>
        <shortName>Endo G-like 1</shortName>
    </alternativeName>
</protein>
<gene>
    <name type="primary">Exog</name>
    <name type="synonym">Endogl1</name>
</gene>
<evidence type="ECO:0000250" key="1"/>
<evidence type="ECO:0000255" key="2"/>
<evidence type="ECO:0000305" key="3"/>
<accession>Q8C163</accession>
<accession>Q3UFL2</accession>
<keyword id="KW-0255">Endonuclease</keyword>
<keyword id="KW-0378">Hydrolase</keyword>
<keyword id="KW-0472">Membrane</keyword>
<keyword id="KW-0479">Metal-binding</keyword>
<keyword id="KW-0496">Mitochondrion</keyword>
<keyword id="KW-0999">Mitochondrion inner membrane</keyword>
<keyword id="KW-0540">Nuclease</keyword>
<keyword id="KW-1185">Reference proteome</keyword>
<keyword id="KW-0809">Transit peptide</keyword>
<dbReference type="EC" id="3.1.30.-"/>
<dbReference type="EMBL" id="AK028887">
    <property type="protein sequence ID" value="BAC26174.1"/>
    <property type="molecule type" value="mRNA"/>
</dbReference>
<dbReference type="EMBL" id="AK148426">
    <property type="protein sequence ID" value="BAE28548.1"/>
    <property type="molecule type" value="mRNA"/>
</dbReference>
<dbReference type="EMBL" id="AK162566">
    <property type="protein sequence ID" value="BAE36970.1"/>
    <property type="molecule type" value="mRNA"/>
</dbReference>
<dbReference type="EMBL" id="AK163555">
    <property type="protein sequence ID" value="BAE37396.1"/>
    <property type="molecule type" value="mRNA"/>
</dbReference>
<dbReference type="EMBL" id="BC119024">
    <property type="protein sequence ID" value="AAI19025.1"/>
    <property type="molecule type" value="mRNA"/>
</dbReference>
<dbReference type="CCDS" id="CCDS23616.1"/>
<dbReference type="RefSeq" id="NP_766044.1">
    <property type="nucleotide sequence ID" value="NM_172456.4"/>
</dbReference>
<dbReference type="SMR" id="Q8C163"/>
<dbReference type="BioGRID" id="228962">
    <property type="interactions" value="2"/>
</dbReference>
<dbReference type="FunCoup" id="Q8C163">
    <property type="interactions" value="1860"/>
</dbReference>
<dbReference type="IntAct" id="Q8C163">
    <property type="interactions" value="2"/>
</dbReference>
<dbReference type="STRING" id="10090.ENSMUSP00000035094"/>
<dbReference type="GlyGen" id="Q8C163">
    <property type="glycosylation" value="1 site, 1 O-linked glycan (1 site)"/>
</dbReference>
<dbReference type="iPTMnet" id="Q8C163"/>
<dbReference type="PhosphoSitePlus" id="Q8C163"/>
<dbReference type="SwissPalm" id="Q8C163"/>
<dbReference type="jPOST" id="Q8C163"/>
<dbReference type="PaxDb" id="10090-ENSMUSP00000129273"/>
<dbReference type="PeptideAtlas" id="Q8C163"/>
<dbReference type="ProteomicsDB" id="275791"/>
<dbReference type="Pumba" id="Q8C163"/>
<dbReference type="Antibodypedia" id="2527">
    <property type="antibodies" value="163 antibodies from 31 providers"/>
</dbReference>
<dbReference type="DNASU" id="208194"/>
<dbReference type="Ensembl" id="ENSMUST00000035094.14">
    <property type="protein sequence ID" value="ENSMUSP00000035094.7"/>
    <property type="gene ID" value="ENSMUSG00000042787.16"/>
</dbReference>
<dbReference type="GeneID" id="208194"/>
<dbReference type="KEGG" id="mmu:208194"/>
<dbReference type="UCSC" id="uc009saz.2">
    <property type="organism name" value="mouse"/>
</dbReference>
<dbReference type="AGR" id="MGI:2143333"/>
<dbReference type="CTD" id="9941"/>
<dbReference type="MGI" id="MGI:2143333">
    <property type="gene designation" value="Exog"/>
</dbReference>
<dbReference type="VEuPathDB" id="HostDB:ENSMUSG00000042787"/>
<dbReference type="eggNOG" id="KOG3721">
    <property type="taxonomic scope" value="Eukaryota"/>
</dbReference>
<dbReference type="GeneTree" id="ENSGT00940000160677"/>
<dbReference type="HOGENOM" id="CLU_055174_3_0_1"/>
<dbReference type="InParanoid" id="Q8C163"/>
<dbReference type="OMA" id="TCKLMGF"/>
<dbReference type="OrthoDB" id="5418055at2759"/>
<dbReference type="PhylomeDB" id="Q8C163"/>
<dbReference type="BioGRID-ORCS" id="208194">
    <property type="hits" value="4 hits in 76 CRISPR screens"/>
</dbReference>
<dbReference type="ChiTaRS" id="Exog">
    <property type="organism name" value="mouse"/>
</dbReference>
<dbReference type="PRO" id="PR:Q8C163"/>
<dbReference type="Proteomes" id="UP000000589">
    <property type="component" value="Chromosome 9"/>
</dbReference>
<dbReference type="RNAct" id="Q8C163">
    <property type="molecule type" value="protein"/>
</dbReference>
<dbReference type="Bgee" id="ENSMUSG00000042787">
    <property type="expression patterns" value="Expressed in manus and 215 other cell types or tissues"/>
</dbReference>
<dbReference type="ExpressionAtlas" id="Q8C163">
    <property type="expression patterns" value="baseline and differential"/>
</dbReference>
<dbReference type="GO" id="GO:0005743">
    <property type="term" value="C:mitochondrial inner membrane"/>
    <property type="evidence" value="ECO:0007669"/>
    <property type="project" value="UniProtKB-SubCell"/>
</dbReference>
<dbReference type="GO" id="GO:0005739">
    <property type="term" value="C:mitochondrion"/>
    <property type="evidence" value="ECO:0007005"/>
    <property type="project" value="MGI"/>
</dbReference>
<dbReference type="GO" id="GO:0032991">
    <property type="term" value="C:protein-containing complex"/>
    <property type="evidence" value="ECO:0000266"/>
    <property type="project" value="MGI"/>
</dbReference>
<dbReference type="GO" id="GO:0008409">
    <property type="term" value="F:5'-3' exonuclease activity"/>
    <property type="evidence" value="ECO:0007669"/>
    <property type="project" value="Ensembl"/>
</dbReference>
<dbReference type="GO" id="GO:0004519">
    <property type="term" value="F:endonuclease activity"/>
    <property type="evidence" value="ECO:0007669"/>
    <property type="project" value="UniProtKB-KW"/>
</dbReference>
<dbReference type="GO" id="GO:0046872">
    <property type="term" value="F:metal ion binding"/>
    <property type="evidence" value="ECO:0007669"/>
    <property type="project" value="UniProtKB-KW"/>
</dbReference>
<dbReference type="GO" id="GO:0003676">
    <property type="term" value="F:nucleic acid binding"/>
    <property type="evidence" value="ECO:0007669"/>
    <property type="project" value="InterPro"/>
</dbReference>
<dbReference type="CDD" id="cd00091">
    <property type="entry name" value="NUC"/>
    <property type="match status" value="1"/>
</dbReference>
<dbReference type="FunFam" id="3.40.570.10:FF:000003">
    <property type="entry name" value="Nuclease EXOG, mitochondrial"/>
    <property type="match status" value="1"/>
</dbReference>
<dbReference type="Gene3D" id="6.10.250.1250">
    <property type="match status" value="1"/>
</dbReference>
<dbReference type="Gene3D" id="3.40.570.10">
    <property type="entry name" value="Extracellular Endonuclease, subunit A"/>
    <property type="match status" value="1"/>
</dbReference>
<dbReference type="InterPro" id="IPR044929">
    <property type="entry name" value="DNA/RNA_non-sp_Endonuclease_sf"/>
</dbReference>
<dbReference type="InterPro" id="IPR001604">
    <property type="entry name" value="Endo_G_ENPP1-like_dom"/>
</dbReference>
<dbReference type="InterPro" id="IPR020821">
    <property type="entry name" value="ENPP1-3/EXOG-like_nuc-like"/>
</dbReference>
<dbReference type="InterPro" id="IPR041003">
    <property type="entry name" value="Exog_C"/>
</dbReference>
<dbReference type="InterPro" id="IPR044925">
    <property type="entry name" value="His-Me_finger_sf"/>
</dbReference>
<dbReference type="InterPro" id="IPR040255">
    <property type="entry name" value="Non-specific_endonuclease"/>
</dbReference>
<dbReference type="PANTHER" id="PTHR13966">
    <property type="entry name" value="ENDONUCLEASE RELATED"/>
    <property type="match status" value="1"/>
</dbReference>
<dbReference type="PANTHER" id="PTHR13966:SF19">
    <property type="entry name" value="NUCLEASE EXOG, MITOCHONDRIAL"/>
    <property type="match status" value="1"/>
</dbReference>
<dbReference type="Pfam" id="PF01223">
    <property type="entry name" value="Endonuclease_NS"/>
    <property type="match status" value="1"/>
</dbReference>
<dbReference type="Pfam" id="PF18026">
    <property type="entry name" value="Exog_C"/>
    <property type="match status" value="1"/>
</dbReference>
<dbReference type="SMART" id="SM00892">
    <property type="entry name" value="Endonuclease_NS"/>
    <property type="match status" value="1"/>
</dbReference>
<dbReference type="SMART" id="SM00477">
    <property type="entry name" value="NUC"/>
    <property type="match status" value="1"/>
</dbReference>
<dbReference type="SUPFAM" id="SSF54060">
    <property type="entry name" value="His-Me finger endonucleases"/>
    <property type="match status" value="1"/>
</dbReference>
<name>EXOG_MOUSE</name>
<comment type="function">
    <text evidence="1">Endo/exonuclease with nicking activity towards supercoiled DNA, a preference for single-stranded DNA and 5'-3' exonuclease activity.</text>
</comment>
<comment type="cofactor">
    <cofactor evidence="1">
        <name>a divalent metal cation</name>
        <dbReference type="ChEBI" id="CHEBI:60240"/>
    </cofactor>
</comment>
<comment type="subunit">
    <text evidence="1">Homodimer.</text>
</comment>
<comment type="subcellular location">
    <subcellularLocation>
        <location evidence="1">Mitochondrion inner membrane</location>
    </subcellularLocation>
</comment>
<comment type="miscellaneous">
    <text evidence="1">The active site contains 1 hydrated divalent metal cation that has only 1 direct interaction with the protein; all other interactions are via water molecules.</text>
</comment>
<comment type="similarity">
    <text evidence="3">Belongs to the DNA/RNA non-specific endonuclease family.</text>
</comment>
<organism>
    <name type="scientific">Mus musculus</name>
    <name type="common">Mouse</name>
    <dbReference type="NCBI Taxonomy" id="10090"/>
    <lineage>
        <taxon>Eukaryota</taxon>
        <taxon>Metazoa</taxon>
        <taxon>Chordata</taxon>
        <taxon>Craniata</taxon>
        <taxon>Vertebrata</taxon>
        <taxon>Euteleostomi</taxon>
        <taxon>Mammalia</taxon>
        <taxon>Eutheria</taxon>
        <taxon>Euarchontoglires</taxon>
        <taxon>Glires</taxon>
        <taxon>Rodentia</taxon>
        <taxon>Myomorpha</taxon>
        <taxon>Muroidea</taxon>
        <taxon>Muridae</taxon>
        <taxon>Murinae</taxon>
        <taxon>Mus</taxon>
        <taxon>Mus</taxon>
    </lineage>
</organism>
<sequence length="368" mass="41384">MAAKSFASRLRDSRRFLNGFLAGAVVGAAGAGLTALQFFRRPDAESAKLARQPHESAEEAVLEQFGFPLAGTETRRYTNHALSYDQAKRVPRWVLEHISKDKIIGDADRKHCKFKPDPSVPSAFSALNEDYIGSGWSRGHMAPAGNNKFSSEAMAETFYLSNIVPQNFDNNSGYWNRIEMYCRELTERFEDVWIVSGPLTLPHTRNDGTKTVSYQVIGEDNVAVPSHLYKVILARRSPESTEPLALGAFVVPNKAIGFQSQLSEFQVSLHDLEKMSGLVFFPRLDRSRDIRNICSVDTCKLLGFQEFTLYLSTRKIDGARSVARLEKVLEALKSSGVEPDDYFLSRYEKKLEELKAKEQKDAQLEKQS</sequence>
<feature type="transit peptide" description="Mitochondrion" evidence="2">
    <location>
        <begin position="1"/>
        <end position="41"/>
    </location>
</feature>
<feature type="chain" id="PRO_0000342610" description="Nuclease EXOG, mitochondrial">
    <location>
        <begin position="42"/>
        <end position="368"/>
    </location>
</feature>
<feature type="active site" description="Proton acceptor" evidence="1">
    <location>
        <position position="140"/>
    </location>
</feature>
<feature type="binding site" evidence="1">
    <location>
        <position position="171"/>
    </location>
    <ligand>
        <name>a divalent metal cation</name>
        <dbReference type="ChEBI" id="CHEBI:60240"/>
        <note>catalytic</note>
    </ligand>
</feature>
<feature type="sequence conflict" description="In Ref. 1; BAE28548." evidence="3" ref="1">
    <original>F</original>
    <variation>L</variation>
    <location>
        <position position="39"/>
    </location>
</feature>
<feature type="sequence conflict" description="In Ref. 1; BAE28548." evidence="3" ref="1">
    <original>R</original>
    <variation>C</variation>
    <location>
        <position position="283"/>
    </location>
</feature>
<reference key="1">
    <citation type="journal article" date="2005" name="Science">
        <title>The transcriptional landscape of the mammalian genome.</title>
        <authorList>
            <person name="Carninci P."/>
            <person name="Kasukawa T."/>
            <person name="Katayama S."/>
            <person name="Gough J."/>
            <person name="Frith M.C."/>
            <person name="Maeda N."/>
            <person name="Oyama R."/>
            <person name="Ravasi T."/>
            <person name="Lenhard B."/>
            <person name="Wells C."/>
            <person name="Kodzius R."/>
            <person name="Shimokawa K."/>
            <person name="Bajic V.B."/>
            <person name="Brenner S.E."/>
            <person name="Batalov S."/>
            <person name="Forrest A.R."/>
            <person name="Zavolan M."/>
            <person name="Davis M.J."/>
            <person name="Wilming L.G."/>
            <person name="Aidinis V."/>
            <person name="Allen J.E."/>
            <person name="Ambesi-Impiombato A."/>
            <person name="Apweiler R."/>
            <person name="Aturaliya R.N."/>
            <person name="Bailey T.L."/>
            <person name="Bansal M."/>
            <person name="Baxter L."/>
            <person name="Beisel K.W."/>
            <person name="Bersano T."/>
            <person name="Bono H."/>
            <person name="Chalk A.M."/>
            <person name="Chiu K.P."/>
            <person name="Choudhary V."/>
            <person name="Christoffels A."/>
            <person name="Clutterbuck D.R."/>
            <person name="Crowe M.L."/>
            <person name="Dalla E."/>
            <person name="Dalrymple B.P."/>
            <person name="de Bono B."/>
            <person name="Della Gatta G."/>
            <person name="di Bernardo D."/>
            <person name="Down T."/>
            <person name="Engstrom P."/>
            <person name="Fagiolini M."/>
            <person name="Faulkner G."/>
            <person name="Fletcher C.F."/>
            <person name="Fukushima T."/>
            <person name="Furuno M."/>
            <person name="Futaki S."/>
            <person name="Gariboldi M."/>
            <person name="Georgii-Hemming P."/>
            <person name="Gingeras T.R."/>
            <person name="Gojobori T."/>
            <person name="Green R.E."/>
            <person name="Gustincich S."/>
            <person name="Harbers M."/>
            <person name="Hayashi Y."/>
            <person name="Hensch T.K."/>
            <person name="Hirokawa N."/>
            <person name="Hill D."/>
            <person name="Huminiecki L."/>
            <person name="Iacono M."/>
            <person name="Ikeo K."/>
            <person name="Iwama A."/>
            <person name="Ishikawa T."/>
            <person name="Jakt M."/>
            <person name="Kanapin A."/>
            <person name="Katoh M."/>
            <person name="Kawasawa Y."/>
            <person name="Kelso J."/>
            <person name="Kitamura H."/>
            <person name="Kitano H."/>
            <person name="Kollias G."/>
            <person name="Krishnan S.P."/>
            <person name="Kruger A."/>
            <person name="Kummerfeld S.K."/>
            <person name="Kurochkin I.V."/>
            <person name="Lareau L.F."/>
            <person name="Lazarevic D."/>
            <person name="Lipovich L."/>
            <person name="Liu J."/>
            <person name="Liuni S."/>
            <person name="McWilliam S."/>
            <person name="Madan Babu M."/>
            <person name="Madera M."/>
            <person name="Marchionni L."/>
            <person name="Matsuda H."/>
            <person name="Matsuzawa S."/>
            <person name="Miki H."/>
            <person name="Mignone F."/>
            <person name="Miyake S."/>
            <person name="Morris K."/>
            <person name="Mottagui-Tabar S."/>
            <person name="Mulder N."/>
            <person name="Nakano N."/>
            <person name="Nakauchi H."/>
            <person name="Ng P."/>
            <person name="Nilsson R."/>
            <person name="Nishiguchi S."/>
            <person name="Nishikawa S."/>
            <person name="Nori F."/>
            <person name="Ohara O."/>
            <person name="Okazaki Y."/>
            <person name="Orlando V."/>
            <person name="Pang K.C."/>
            <person name="Pavan W.J."/>
            <person name="Pavesi G."/>
            <person name="Pesole G."/>
            <person name="Petrovsky N."/>
            <person name="Piazza S."/>
            <person name="Reed J."/>
            <person name="Reid J.F."/>
            <person name="Ring B.Z."/>
            <person name="Ringwald M."/>
            <person name="Rost B."/>
            <person name="Ruan Y."/>
            <person name="Salzberg S.L."/>
            <person name="Sandelin A."/>
            <person name="Schneider C."/>
            <person name="Schoenbach C."/>
            <person name="Sekiguchi K."/>
            <person name="Semple C.A."/>
            <person name="Seno S."/>
            <person name="Sessa L."/>
            <person name="Sheng Y."/>
            <person name="Shibata Y."/>
            <person name="Shimada H."/>
            <person name="Shimada K."/>
            <person name="Silva D."/>
            <person name="Sinclair B."/>
            <person name="Sperling S."/>
            <person name="Stupka E."/>
            <person name="Sugiura K."/>
            <person name="Sultana R."/>
            <person name="Takenaka Y."/>
            <person name="Taki K."/>
            <person name="Tammoja K."/>
            <person name="Tan S.L."/>
            <person name="Tang S."/>
            <person name="Taylor M.S."/>
            <person name="Tegner J."/>
            <person name="Teichmann S.A."/>
            <person name="Ueda H.R."/>
            <person name="van Nimwegen E."/>
            <person name="Verardo R."/>
            <person name="Wei C.L."/>
            <person name="Yagi K."/>
            <person name="Yamanishi H."/>
            <person name="Zabarovsky E."/>
            <person name="Zhu S."/>
            <person name="Zimmer A."/>
            <person name="Hide W."/>
            <person name="Bult C."/>
            <person name="Grimmond S.M."/>
            <person name="Teasdale R.D."/>
            <person name="Liu E.T."/>
            <person name="Brusic V."/>
            <person name="Quackenbush J."/>
            <person name="Wahlestedt C."/>
            <person name="Mattick J.S."/>
            <person name="Hume D.A."/>
            <person name="Kai C."/>
            <person name="Sasaki D."/>
            <person name="Tomaru Y."/>
            <person name="Fukuda S."/>
            <person name="Kanamori-Katayama M."/>
            <person name="Suzuki M."/>
            <person name="Aoki J."/>
            <person name="Arakawa T."/>
            <person name="Iida J."/>
            <person name="Imamura K."/>
            <person name="Itoh M."/>
            <person name="Kato T."/>
            <person name="Kawaji H."/>
            <person name="Kawagashira N."/>
            <person name="Kawashima T."/>
            <person name="Kojima M."/>
            <person name="Kondo S."/>
            <person name="Konno H."/>
            <person name="Nakano K."/>
            <person name="Ninomiya N."/>
            <person name="Nishio T."/>
            <person name="Okada M."/>
            <person name="Plessy C."/>
            <person name="Shibata K."/>
            <person name="Shiraki T."/>
            <person name="Suzuki S."/>
            <person name="Tagami M."/>
            <person name="Waki K."/>
            <person name="Watahiki A."/>
            <person name="Okamura-Oho Y."/>
            <person name="Suzuki H."/>
            <person name="Kawai J."/>
            <person name="Hayashizaki Y."/>
        </authorList>
    </citation>
    <scope>NUCLEOTIDE SEQUENCE [LARGE SCALE MRNA]</scope>
    <source>
        <strain>C57BL/6J</strain>
        <tissue>Cerebellum</tissue>
        <tissue>Corpora quadrigemina</tissue>
        <tissue>Skin</tissue>
    </source>
</reference>
<reference key="2">
    <citation type="journal article" date="2004" name="Genome Res.">
        <title>The status, quality, and expansion of the NIH full-length cDNA project: the Mammalian Gene Collection (MGC).</title>
        <authorList>
            <consortium name="The MGC Project Team"/>
        </authorList>
    </citation>
    <scope>NUCLEOTIDE SEQUENCE [LARGE SCALE MRNA]</scope>
    <source>
        <tissue>Brain</tissue>
    </source>
</reference>
<reference key="3">
    <citation type="journal article" date="2010" name="Cell">
        <title>A tissue-specific atlas of mouse protein phosphorylation and expression.</title>
        <authorList>
            <person name="Huttlin E.L."/>
            <person name="Jedrychowski M.P."/>
            <person name="Elias J.E."/>
            <person name="Goswami T."/>
            <person name="Rad R."/>
            <person name="Beausoleil S.A."/>
            <person name="Villen J."/>
            <person name="Haas W."/>
            <person name="Sowa M.E."/>
            <person name="Gygi S.P."/>
        </authorList>
    </citation>
    <scope>IDENTIFICATION BY MASS SPECTROMETRY [LARGE SCALE ANALYSIS]</scope>
    <source>
        <tissue>Brain</tissue>
        <tissue>Spleen</tissue>
        <tissue>Testis</tissue>
    </source>
</reference>